<comment type="function">
    <text evidence="1">Catalyzes the reductive methylation of 2'-deoxyuridine-5'-monophosphate (dUMP) to 2'-deoxythymidine-5'-monophosphate (dTMP) while utilizing 5,10-methylenetetrahydrofolate (mTHF) as the methyl donor and reductant in the reaction, yielding dihydrofolate (DHF) as a by-product. This enzymatic reaction provides an intracellular de novo source of dTMP, an essential precursor for DNA biosynthesis.</text>
</comment>
<comment type="catalytic activity">
    <reaction evidence="1">
        <text>dUMP + (6R)-5,10-methylene-5,6,7,8-tetrahydrofolate = 7,8-dihydrofolate + dTMP</text>
        <dbReference type="Rhea" id="RHEA:12104"/>
        <dbReference type="ChEBI" id="CHEBI:15636"/>
        <dbReference type="ChEBI" id="CHEBI:57451"/>
        <dbReference type="ChEBI" id="CHEBI:63528"/>
        <dbReference type="ChEBI" id="CHEBI:246422"/>
        <dbReference type="EC" id="2.1.1.45"/>
    </reaction>
</comment>
<comment type="pathway">
    <text evidence="1">Pyrimidine metabolism; dTTP biosynthesis.</text>
</comment>
<comment type="subunit">
    <text evidence="1">Homodimer.</text>
</comment>
<comment type="subcellular location">
    <subcellularLocation>
        <location evidence="1">Cytoplasm</location>
    </subcellularLocation>
</comment>
<comment type="similarity">
    <text evidence="1">Belongs to the thymidylate synthase family. Bacterial-type ThyA subfamily.</text>
</comment>
<organism>
    <name type="scientific">Streptococcus pneumoniae (strain JJA)</name>
    <dbReference type="NCBI Taxonomy" id="488222"/>
    <lineage>
        <taxon>Bacteria</taxon>
        <taxon>Bacillati</taxon>
        <taxon>Bacillota</taxon>
        <taxon>Bacilli</taxon>
        <taxon>Lactobacillales</taxon>
        <taxon>Streptococcaceae</taxon>
        <taxon>Streptococcus</taxon>
    </lineage>
</organism>
<gene>
    <name evidence="1" type="primary">thyA</name>
    <name type="ordered locus">SPJ_0620</name>
</gene>
<name>TYSY_STRZJ</name>
<dbReference type="EC" id="2.1.1.45" evidence="1"/>
<dbReference type="EMBL" id="CP000919">
    <property type="protein sequence ID" value="ACO18722.1"/>
    <property type="molecule type" value="Genomic_DNA"/>
</dbReference>
<dbReference type="RefSeq" id="WP_000158602.1">
    <property type="nucleotide sequence ID" value="NC_012466.1"/>
</dbReference>
<dbReference type="SMR" id="C1CD36"/>
<dbReference type="KEGG" id="sjj:SPJ_0620"/>
<dbReference type="HOGENOM" id="CLU_021669_0_0_9"/>
<dbReference type="UniPathway" id="UPA00575"/>
<dbReference type="Proteomes" id="UP000002206">
    <property type="component" value="Chromosome"/>
</dbReference>
<dbReference type="GO" id="GO:0005829">
    <property type="term" value="C:cytosol"/>
    <property type="evidence" value="ECO:0007669"/>
    <property type="project" value="TreeGrafter"/>
</dbReference>
<dbReference type="GO" id="GO:0004799">
    <property type="term" value="F:thymidylate synthase activity"/>
    <property type="evidence" value="ECO:0007669"/>
    <property type="project" value="UniProtKB-UniRule"/>
</dbReference>
<dbReference type="GO" id="GO:0006231">
    <property type="term" value="P:dTMP biosynthetic process"/>
    <property type="evidence" value="ECO:0007669"/>
    <property type="project" value="UniProtKB-UniRule"/>
</dbReference>
<dbReference type="GO" id="GO:0006235">
    <property type="term" value="P:dTTP biosynthetic process"/>
    <property type="evidence" value="ECO:0007669"/>
    <property type="project" value="UniProtKB-UniRule"/>
</dbReference>
<dbReference type="GO" id="GO:0032259">
    <property type="term" value="P:methylation"/>
    <property type="evidence" value="ECO:0007669"/>
    <property type="project" value="UniProtKB-KW"/>
</dbReference>
<dbReference type="CDD" id="cd00351">
    <property type="entry name" value="TS_Pyrimidine_HMase"/>
    <property type="match status" value="1"/>
</dbReference>
<dbReference type="FunFam" id="3.30.572.10:FF:000006">
    <property type="entry name" value="Thymidylate synthase"/>
    <property type="match status" value="1"/>
</dbReference>
<dbReference type="Gene3D" id="3.30.572.10">
    <property type="entry name" value="Thymidylate synthase/dCMP hydroxymethylase domain"/>
    <property type="match status" value="1"/>
</dbReference>
<dbReference type="HAMAP" id="MF_00008">
    <property type="entry name" value="Thymidy_synth_bact"/>
    <property type="match status" value="1"/>
</dbReference>
<dbReference type="InterPro" id="IPR045097">
    <property type="entry name" value="Thymidate_synth/dCMP_Mease"/>
</dbReference>
<dbReference type="InterPro" id="IPR023451">
    <property type="entry name" value="Thymidate_synth/dCMP_Mease_dom"/>
</dbReference>
<dbReference type="InterPro" id="IPR036926">
    <property type="entry name" value="Thymidate_synth/dCMP_Mease_sf"/>
</dbReference>
<dbReference type="InterPro" id="IPR000398">
    <property type="entry name" value="Thymidylate_synthase"/>
</dbReference>
<dbReference type="InterPro" id="IPR020940">
    <property type="entry name" value="Thymidylate_synthase_AS"/>
</dbReference>
<dbReference type="NCBIfam" id="NF002495">
    <property type="entry name" value="PRK01827.1-1"/>
    <property type="match status" value="1"/>
</dbReference>
<dbReference type="PANTHER" id="PTHR11548">
    <property type="entry name" value="THYMIDYLATE SYNTHASE 1"/>
    <property type="match status" value="1"/>
</dbReference>
<dbReference type="PANTHER" id="PTHR11548:SF1">
    <property type="entry name" value="THYMIDYLATE SYNTHASE 1"/>
    <property type="match status" value="1"/>
</dbReference>
<dbReference type="Pfam" id="PF00303">
    <property type="entry name" value="Thymidylat_synt"/>
    <property type="match status" value="1"/>
</dbReference>
<dbReference type="PRINTS" id="PR00108">
    <property type="entry name" value="THYMDSNTHASE"/>
</dbReference>
<dbReference type="SUPFAM" id="SSF55831">
    <property type="entry name" value="Thymidylate synthase/dCMP hydroxymethylase"/>
    <property type="match status" value="1"/>
</dbReference>
<dbReference type="PROSITE" id="PS00091">
    <property type="entry name" value="THYMIDYLATE_SYNTHASE"/>
    <property type="match status" value="1"/>
</dbReference>
<evidence type="ECO:0000255" key="1">
    <source>
        <dbReference type="HAMAP-Rule" id="MF_00008"/>
    </source>
</evidence>
<protein>
    <recommendedName>
        <fullName evidence="1">Thymidylate synthase</fullName>
        <shortName evidence="1">TS</shortName>
        <shortName evidence="1">TSase</shortName>
        <ecNumber evidence="1">2.1.1.45</ecNumber>
    </recommendedName>
</protein>
<feature type="chain" id="PRO_1000197263" description="Thymidylate synthase">
    <location>
        <begin position="1"/>
        <end position="279"/>
    </location>
</feature>
<feature type="active site" description="Nucleophile" evidence="1">
    <location>
        <position position="154"/>
    </location>
</feature>
<feature type="binding site" evidence="1">
    <location>
        <begin position="133"/>
        <end position="134"/>
    </location>
    <ligand>
        <name>dUMP</name>
        <dbReference type="ChEBI" id="CHEBI:246422"/>
        <note>ligand shared between dimeric partners</note>
    </ligand>
</feature>
<feature type="binding site" description="in other chain" evidence="1">
    <location>
        <begin position="178"/>
        <end position="181"/>
    </location>
    <ligand>
        <name>dUMP</name>
        <dbReference type="ChEBI" id="CHEBI:246422"/>
        <note>ligand shared between dimeric partners</note>
    </ligand>
</feature>
<feature type="binding site" evidence="1">
    <location>
        <position position="181"/>
    </location>
    <ligand>
        <name>(6R)-5,10-methylene-5,6,7,8-tetrahydrofolate</name>
        <dbReference type="ChEBI" id="CHEBI:15636"/>
    </ligand>
</feature>
<feature type="binding site" description="in other chain" evidence="1">
    <location>
        <position position="189"/>
    </location>
    <ligand>
        <name>dUMP</name>
        <dbReference type="ChEBI" id="CHEBI:246422"/>
        <note>ligand shared between dimeric partners</note>
    </ligand>
</feature>
<feature type="binding site" description="in other chain" evidence="1">
    <location>
        <begin position="219"/>
        <end position="221"/>
    </location>
    <ligand>
        <name>dUMP</name>
        <dbReference type="ChEBI" id="CHEBI:246422"/>
        <note>ligand shared between dimeric partners</note>
    </ligand>
</feature>
<feature type="binding site" evidence="1">
    <location>
        <position position="278"/>
    </location>
    <ligand>
        <name>(6R)-5,10-methylene-5,6,7,8-tetrahydrofolate</name>
        <dbReference type="ChEBI" id="CHEBI:15636"/>
    </ligand>
</feature>
<proteinExistence type="inferred from homology"/>
<keyword id="KW-0963">Cytoplasm</keyword>
<keyword id="KW-0489">Methyltransferase</keyword>
<keyword id="KW-0545">Nucleotide biosynthesis</keyword>
<keyword id="KW-0808">Transferase</keyword>
<reference key="1">
    <citation type="journal article" date="2010" name="Genome Biol.">
        <title>Structure and dynamics of the pan-genome of Streptococcus pneumoniae and closely related species.</title>
        <authorList>
            <person name="Donati C."/>
            <person name="Hiller N.L."/>
            <person name="Tettelin H."/>
            <person name="Muzzi A."/>
            <person name="Croucher N.J."/>
            <person name="Angiuoli S.V."/>
            <person name="Oggioni M."/>
            <person name="Dunning Hotopp J.C."/>
            <person name="Hu F.Z."/>
            <person name="Riley D.R."/>
            <person name="Covacci A."/>
            <person name="Mitchell T.J."/>
            <person name="Bentley S.D."/>
            <person name="Kilian M."/>
            <person name="Ehrlich G.D."/>
            <person name="Rappuoli R."/>
            <person name="Moxon E.R."/>
            <person name="Masignani V."/>
        </authorList>
    </citation>
    <scope>NUCLEOTIDE SEQUENCE [LARGE SCALE GENOMIC DNA]</scope>
    <source>
        <strain>JJA</strain>
    </source>
</reference>
<accession>C1CD36</accession>
<sequence length="279" mass="32501">MTKADTIFKENIECILKEGVFSEQARPKYKDGTVANSKYVTGAFSEYDLSKGEFPITTLRPIAIKSAIKEVLWIYQDQSNSLEVLNDKYNVHYWNDWEVGDTGTIGERYGAVVKKHDIINKLLKQLETNPWNRRNIISLWDYQAFEETDGLLPCAFQTMFDVRRVDGEIYLDATLTQRSNDMLVAHHINAMQYVALQMMIAKHFGWKVGKFFYFINNLHIYDNQFEQAQELLRREPSNCQPRLVLNVPDGTNFFDIKAEDFELVDYDPVKPQLKFDLAI</sequence>